<sequence length="138" mass="15210">MRILGLDLGTKTLGVALSDEMGWTAQGIETIKINEAEGDYGLSRLSELIKDYTIDKIVLGFPKNMNGTVGPRGEASQTFAKVLETTYNVPVVLWDERLTTMAAEKMLIAADVSRQKRKKVIDKMAAVMILQGYLDSLN</sequence>
<feature type="chain" id="PRO_0000172023" description="Putative pre-16S rRNA nuclease">
    <location>
        <begin position="1"/>
        <end position="138"/>
    </location>
</feature>
<feature type="strand" evidence="4">
    <location>
        <begin position="2"/>
        <end position="8"/>
    </location>
</feature>
<feature type="strand" evidence="4">
    <location>
        <begin position="10"/>
        <end position="18"/>
    </location>
</feature>
<feature type="strand" evidence="4">
    <location>
        <begin position="22"/>
        <end position="32"/>
    </location>
</feature>
<feature type="helix" evidence="4">
    <location>
        <begin position="35"/>
        <end position="37"/>
    </location>
</feature>
<feature type="helix" evidence="4">
    <location>
        <begin position="42"/>
        <end position="49"/>
    </location>
</feature>
<feature type="strand" evidence="4">
    <location>
        <begin position="52"/>
        <end position="60"/>
    </location>
</feature>
<feature type="helix" evidence="4">
    <location>
        <begin position="71"/>
        <end position="87"/>
    </location>
</feature>
<feature type="strand" evidence="4">
    <location>
        <begin position="91"/>
        <end position="94"/>
    </location>
</feature>
<feature type="helix" evidence="4">
    <location>
        <begin position="100"/>
        <end position="109"/>
    </location>
</feature>
<feature type="helix" evidence="4">
    <location>
        <begin position="114"/>
        <end position="137"/>
    </location>
</feature>
<protein>
    <recommendedName>
        <fullName evidence="1">Putative pre-16S rRNA nuclease</fullName>
        <ecNumber evidence="1">3.1.-.-</ecNumber>
    </recommendedName>
</protein>
<name>YQGF_BACSU</name>
<reference key="1">
    <citation type="journal article" date="1997" name="Nature">
        <title>The complete genome sequence of the Gram-positive bacterium Bacillus subtilis.</title>
        <authorList>
            <person name="Kunst F."/>
            <person name="Ogasawara N."/>
            <person name="Moszer I."/>
            <person name="Albertini A.M."/>
            <person name="Alloni G."/>
            <person name="Azevedo V."/>
            <person name="Bertero M.G."/>
            <person name="Bessieres P."/>
            <person name="Bolotin A."/>
            <person name="Borchert S."/>
            <person name="Borriss R."/>
            <person name="Boursier L."/>
            <person name="Brans A."/>
            <person name="Braun M."/>
            <person name="Brignell S.C."/>
            <person name="Bron S."/>
            <person name="Brouillet S."/>
            <person name="Bruschi C.V."/>
            <person name="Caldwell B."/>
            <person name="Capuano V."/>
            <person name="Carter N.M."/>
            <person name="Choi S.-K."/>
            <person name="Codani J.-J."/>
            <person name="Connerton I.F."/>
            <person name="Cummings N.J."/>
            <person name="Daniel R.A."/>
            <person name="Denizot F."/>
            <person name="Devine K.M."/>
            <person name="Duesterhoeft A."/>
            <person name="Ehrlich S.D."/>
            <person name="Emmerson P.T."/>
            <person name="Entian K.-D."/>
            <person name="Errington J."/>
            <person name="Fabret C."/>
            <person name="Ferrari E."/>
            <person name="Foulger D."/>
            <person name="Fritz C."/>
            <person name="Fujita M."/>
            <person name="Fujita Y."/>
            <person name="Fuma S."/>
            <person name="Galizzi A."/>
            <person name="Galleron N."/>
            <person name="Ghim S.-Y."/>
            <person name="Glaser P."/>
            <person name="Goffeau A."/>
            <person name="Golightly E.J."/>
            <person name="Grandi G."/>
            <person name="Guiseppi G."/>
            <person name="Guy B.J."/>
            <person name="Haga K."/>
            <person name="Haiech J."/>
            <person name="Harwood C.R."/>
            <person name="Henaut A."/>
            <person name="Hilbert H."/>
            <person name="Holsappel S."/>
            <person name="Hosono S."/>
            <person name="Hullo M.-F."/>
            <person name="Itaya M."/>
            <person name="Jones L.-M."/>
            <person name="Joris B."/>
            <person name="Karamata D."/>
            <person name="Kasahara Y."/>
            <person name="Klaerr-Blanchard M."/>
            <person name="Klein C."/>
            <person name="Kobayashi Y."/>
            <person name="Koetter P."/>
            <person name="Koningstein G."/>
            <person name="Krogh S."/>
            <person name="Kumano M."/>
            <person name="Kurita K."/>
            <person name="Lapidus A."/>
            <person name="Lardinois S."/>
            <person name="Lauber J."/>
            <person name="Lazarevic V."/>
            <person name="Lee S.-M."/>
            <person name="Levine A."/>
            <person name="Liu H."/>
            <person name="Masuda S."/>
            <person name="Mauel C."/>
            <person name="Medigue C."/>
            <person name="Medina N."/>
            <person name="Mellado R.P."/>
            <person name="Mizuno M."/>
            <person name="Moestl D."/>
            <person name="Nakai S."/>
            <person name="Noback M."/>
            <person name="Noone D."/>
            <person name="O'Reilly M."/>
            <person name="Ogawa K."/>
            <person name="Ogiwara A."/>
            <person name="Oudega B."/>
            <person name="Park S.-H."/>
            <person name="Parro V."/>
            <person name="Pohl T.M."/>
            <person name="Portetelle D."/>
            <person name="Porwollik S."/>
            <person name="Prescott A.M."/>
            <person name="Presecan E."/>
            <person name="Pujic P."/>
            <person name="Purnelle B."/>
            <person name="Rapoport G."/>
            <person name="Rey M."/>
            <person name="Reynolds S."/>
            <person name="Rieger M."/>
            <person name="Rivolta C."/>
            <person name="Rocha E."/>
            <person name="Roche B."/>
            <person name="Rose M."/>
            <person name="Sadaie Y."/>
            <person name="Sato T."/>
            <person name="Scanlan E."/>
            <person name="Schleich S."/>
            <person name="Schroeter R."/>
            <person name="Scoffone F."/>
            <person name="Sekiguchi J."/>
            <person name="Sekowska A."/>
            <person name="Seror S.J."/>
            <person name="Serror P."/>
            <person name="Shin B.-S."/>
            <person name="Soldo B."/>
            <person name="Sorokin A."/>
            <person name="Tacconi E."/>
            <person name="Takagi T."/>
            <person name="Takahashi H."/>
            <person name="Takemaru K."/>
            <person name="Takeuchi M."/>
            <person name="Tamakoshi A."/>
            <person name="Tanaka T."/>
            <person name="Terpstra P."/>
            <person name="Tognoni A."/>
            <person name="Tosato V."/>
            <person name="Uchiyama S."/>
            <person name="Vandenbol M."/>
            <person name="Vannier F."/>
            <person name="Vassarotti A."/>
            <person name="Viari A."/>
            <person name="Wambutt R."/>
            <person name="Wedler E."/>
            <person name="Wedler H."/>
            <person name="Weitzenegger T."/>
            <person name="Winters P."/>
            <person name="Wipat A."/>
            <person name="Yamamoto H."/>
            <person name="Yamane K."/>
            <person name="Yasumoto K."/>
            <person name="Yata K."/>
            <person name="Yoshida K."/>
            <person name="Yoshikawa H.-F."/>
            <person name="Zumstein E."/>
            <person name="Yoshikawa H."/>
            <person name="Danchin A."/>
        </authorList>
    </citation>
    <scope>NUCLEOTIDE SEQUENCE [LARGE SCALE GENOMIC DNA]</scope>
    <source>
        <strain>168</strain>
    </source>
</reference>
<reference key="2">
    <citation type="journal article" date="2003" name="Proc. Natl. Acad. Sci. U.S.A.">
        <title>Essential Bacillus subtilis genes.</title>
        <authorList>
            <person name="Kobayashi K."/>
            <person name="Ehrlich S.D."/>
            <person name="Albertini A."/>
            <person name="Amati G."/>
            <person name="Andersen K.K."/>
            <person name="Arnaud M."/>
            <person name="Asai K."/>
            <person name="Ashikaga S."/>
            <person name="Aymerich S."/>
            <person name="Bessieres P."/>
            <person name="Boland F."/>
            <person name="Brignell S.C."/>
            <person name="Bron S."/>
            <person name="Bunai K."/>
            <person name="Chapuis J."/>
            <person name="Christiansen L.C."/>
            <person name="Danchin A."/>
            <person name="Debarbouille M."/>
            <person name="Dervyn E."/>
            <person name="Deuerling E."/>
            <person name="Devine K."/>
            <person name="Devine S.K."/>
            <person name="Dreesen O."/>
            <person name="Errington J."/>
            <person name="Fillinger S."/>
            <person name="Foster S.J."/>
            <person name="Fujita Y."/>
            <person name="Galizzi A."/>
            <person name="Gardan R."/>
            <person name="Eschevins C."/>
            <person name="Fukushima T."/>
            <person name="Haga K."/>
            <person name="Harwood C.R."/>
            <person name="Hecker M."/>
            <person name="Hosoya D."/>
            <person name="Hullo M.F."/>
            <person name="Kakeshita H."/>
            <person name="Karamata D."/>
            <person name="Kasahara Y."/>
            <person name="Kawamura F."/>
            <person name="Koga K."/>
            <person name="Koski P."/>
            <person name="Kuwana R."/>
            <person name="Imamura D."/>
            <person name="Ishimaru M."/>
            <person name="Ishikawa S."/>
            <person name="Ishio I."/>
            <person name="Le Coq D."/>
            <person name="Masson A."/>
            <person name="Mauel C."/>
            <person name="Meima R."/>
            <person name="Mellado R.P."/>
            <person name="Moir A."/>
            <person name="Moriya S."/>
            <person name="Nagakawa E."/>
            <person name="Nanamiya H."/>
            <person name="Nakai S."/>
            <person name="Nygaard P."/>
            <person name="Ogura M."/>
            <person name="Ohanan T."/>
            <person name="O'Reilly M."/>
            <person name="O'Rourke M."/>
            <person name="Pragai Z."/>
            <person name="Pooley H.M."/>
            <person name="Rapoport G."/>
            <person name="Rawlins J.P."/>
            <person name="Rivas L.A."/>
            <person name="Rivolta C."/>
            <person name="Sadaie A."/>
            <person name="Sadaie Y."/>
            <person name="Sarvas M."/>
            <person name="Sato T."/>
            <person name="Saxild H.H."/>
            <person name="Scanlan E."/>
            <person name="Schumann W."/>
            <person name="Seegers J.F."/>
            <person name="Sekiguchi J."/>
            <person name="Sekowska A."/>
            <person name="Seror S.J."/>
            <person name="Simon M."/>
            <person name="Stragier P."/>
            <person name="Studer R."/>
            <person name="Takamatsu H."/>
            <person name="Tanaka T."/>
            <person name="Takeuchi M."/>
            <person name="Thomaides H.B."/>
            <person name="Vagner V."/>
            <person name="van Dijl J.M."/>
            <person name="Watabe K."/>
            <person name="Wipat A."/>
            <person name="Yamamoto H."/>
            <person name="Yamamoto M."/>
            <person name="Yamamoto Y."/>
            <person name="Yamane K."/>
            <person name="Yata K."/>
            <person name="Yoshida K."/>
            <person name="Yoshikawa H."/>
            <person name="Zuber U."/>
            <person name="Ogasawara N."/>
        </authorList>
    </citation>
    <scope>DISRUPTION PHENOTYPE</scope>
    <source>
        <strain>168</strain>
    </source>
</reference>
<reference key="3">
    <citation type="journal article" date="2005" name="Proteins">
        <title>Structural analysis of a set of proteins resulting from a bacterial genomics project.</title>
        <authorList>
            <person name="Badger J."/>
            <person name="Sauder J.M."/>
            <person name="Adams J.M."/>
            <person name="Antonysamy S."/>
            <person name="Bain K."/>
            <person name="Bergseid M.G."/>
            <person name="Buchanan S.G."/>
            <person name="Buchanan M.D."/>
            <person name="Batiyenko Y."/>
            <person name="Christopher J.A."/>
            <person name="Emtage S."/>
            <person name="Eroshkina A."/>
            <person name="Feil I."/>
            <person name="Furlong E.B."/>
            <person name="Gajiwala K.S."/>
            <person name="Gao X."/>
            <person name="He D."/>
            <person name="Hendle J."/>
            <person name="Huber A."/>
            <person name="Hoda K."/>
            <person name="Kearins P."/>
            <person name="Kissinger C."/>
            <person name="Laubert B."/>
            <person name="Lewis H.A."/>
            <person name="Lin J."/>
            <person name="Loomis K."/>
            <person name="Lorimer D."/>
            <person name="Louie G."/>
            <person name="Maletic M."/>
            <person name="Marsh C.D."/>
            <person name="Miller I."/>
            <person name="Molinari J."/>
            <person name="Muller-Dieckmann H.J."/>
            <person name="Newman J.M."/>
            <person name="Noland B.W."/>
            <person name="Pagarigan B."/>
            <person name="Park F."/>
            <person name="Peat T.S."/>
            <person name="Post K.W."/>
            <person name="Radojicic S."/>
            <person name="Ramos A."/>
            <person name="Romero R."/>
            <person name="Rutter M.E."/>
            <person name="Sanderson W.E."/>
            <person name="Schwinn K.D."/>
            <person name="Tresser J."/>
            <person name="Winhoven J."/>
            <person name="Wright T.A."/>
            <person name="Wu L."/>
            <person name="Xu J."/>
            <person name="Harris T.J.R."/>
        </authorList>
    </citation>
    <scope>X-RAY CRYSTALLOGRAPHY (1.96 ANGSTROMS) OF 2-138</scope>
    <scope>DISCUSSION OF POSSIBLE FUNCTION</scope>
</reference>
<organism>
    <name type="scientific">Bacillus subtilis (strain 168)</name>
    <dbReference type="NCBI Taxonomy" id="224308"/>
    <lineage>
        <taxon>Bacteria</taxon>
        <taxon>Bacillati</taxon>
        <taxon>Bacillota</taxon>
        <taxon>Bacilli</taxon>
        <taxon>Bacillales</taxon>
        <taxon>Bacillaceae</taxon>
        <taxon>Bacillus</taxon>
    </lineage>
</organism>
<proteinExistence type="evidence at protein level"/>
<accession>O34634</accession>
<comment type="function">
    <text evidence="1">Could be a nuclease involved in processing of the 5'-end of pre-16S rRNA.</text>
</comment>
<comment type="subcellular location">
    <subcellularLocation>
        <location evidence="1">Cytoplasm</location>
    </subcellularLocation>
</comment>
<comment type="disruption phenotype">
    <text evidence="2">Not essential, it can be disrupted.</text>
</comment>
<comment type="similarity">
    <text evidence="1">Belongs to the YqgF nuclease family.</text>
</comment>
<comment type="caution">
    <text evidence="3">Was originally suggested to be a nuclease that resolves Holliday junction intermediates during genetic recombination.</text>
</comment>
<gene>
    <name type="primary">yrrK</name>
    <name evidence="3" type="synonym">yqgf</name>
    <name type="ordered locus">BSU27390</name>
</gene>
<keyword id="KW-0002">3D-structure</keyword>
<keyword id="KW-0963">Cytoplasm</keyword>
<keyword id="KW-0378">Hydrolase</keyword>
<keyword id="KW-0540">Nuclease</keyword>
<keyword id="KW-1185">Reference proteome</keyword>
<keyword id="KW-0690">Ribosome biogenesis</keyword>
<evidence type="ECO:0000255" key="1">
    <source>
        <dbReference type="HAMAP-Rule" id="MF_00651"/>
    </source>
</evidence>
<evidence type="ECO:0000269" key="2">
    <source>
    </source>
</evidence>
<evidence type="ECO:0000303" key="3">
    <source>
    </source>
</evidence>
<evidence type="ECO:0007829" key="4">
    <source>
        <dbReference type="PDB" id="1VHX"/>
    </source>
</evidence>
<dbReference type="EC" id="3.1.-.-" evidence="1"/>
<dbReference type="EMBL" id="AL009126">
    <property type="protein sequence ID" value="CAB14681.1"/>
    <property type="molecule type" value="Genomic_DNA"/>
</dbReference>
<dbReference type="PIR" id="D69979">
    <property type="entry name" value="D69979"/>
</dbReference>
<dbReference type="PDB" id="1VHX">
    <property type="method" value="X-ray"/>
    <property type="resolution" value="1.96 A"/>
    <property type="chains" value="A/B=2-138"/>
</dbReference>
<dbReference type="PDBsum" id="1VHX"/>
<dbReference type="SMR" id="O34634"/>
<dbReference type="FunCoup" id="O34634">
    <property type="interactions" value="354"/>
</dbReference>
<dbReference type="STRING" id="224308.BSU27390"/>
<dbReference type="PaxDb" id="224308-BSU27390"/>
<dbReference type="EnsemblBacteria" id="CAB14681">
    <property type="protein sequence ID" value="CAB14681"/>
    <property type="gene ID" value="BSU_27390"/>
</dbReference>
<dbReference type="GeneID" id="937357"/>
<dbReference type="KEGG" id="bsu:BSU27390"/>
<dbReference type="PATRIC" id="fig|224308.179.peg.2975"/>
<dbReference type="eggNOG" id="COG0816">
    <property type="taxonomic scope" value="Bacteria"/>
</dbReference>
<dbReference type="InParanoid" id="O34634"/>
<dbReference type="OrthoDB" id="9796140at2"/>
<dbReference type="PhylomeDB" id="O34634"/>
<dbReference type="BioCyc" id="BSUB:BSU27390-MONOMER"/>
<dbReference type="EvolutionaryTrace" id="O34634"/>
<dbReference type="Proteomes" id="UP000001570">
    <property type="component" value="Chromosome"/>
</dbReference>
<dbReference type="GO" id="GO:0005737">
    <property type="term" value="C:cytoplasm"/>
    <property type="evidence" value="ECO:0007669"/>
    <property type="project" value="UniProtKB-SubCell"/>
</dbReference>
<dbReference type="GO" id="GO:0004518">
    <property type="term" value="F:nuclease activity"/>
    <property type="evidence" value="ECO:0007669"/>
    <property type="project" value="UniProtKB-KW"/>
</dbReference>
<dbReference type="GO" id="GO:0000967">
    <property type="term" value="P:rRNA 5'-end processing"/>
    <property type="evidence" value="ECO:0000318"/>
    <property type="project" value="GO_Central"/>
</dbReference>
<dbReference type="CDD" id="cd16964">
    <property type="entry name" value="YqgF"/>
    <property type="match status" value="1"/>
</dbReference>
<dbReference type="FunFam" id="3.30.420.140:FF:000003">
    <property type="entry name" value="Putative pre-16S rRNA nuclease"/>
    <property type="match status" value="1"/>
</dbReference>
<dbReference type="Gene3D" id="3.30.420.140">
    <property type="entry name" value="YqgF/RNase H-like domain"/>
    <property type="match status" value="1"/>
</dbReference>
<dbReference type="HAMAP" id="MF_00651">
    <property type="entry name" value="Nuclease_YqgF"/>
    <property type="match status" value="1"/>
</dbReference>
<dbReference type="InterPro" id="IPR012337">
    <property type="entry name" value="RNaseH-like_sf"/>
</dbReference>
<dbReference type="InterPro" id="IPR005227">
    <property type="entry name" value="YqgF"/>
</dbReference>
<dbReference type="InterPro" id="IPR006641">
    <property type="entry name" value="YqgF/RNaseH-like_dom"/>
</dbReference>
<dbReference type="InterPro" id="IPR037027">
    <property type="entry name" value="YqgF/RNaseH-like_dom_sf"/>
</dbReference>
<dbReference type="NCBIfam" id="TIGR00250">
    <property type="entry name" value="RNAse_H_YqgF"/>
    <property type="match status" value="1"/>
</dbReference>
<dbReference type="PANTHER" id="PTHR33317">
    <property type="entry name" value="POLYNUCLEOTIDYL TRANSFERASE, RIBONUCLEASE H-LIKE SUPERFAMILY PROTEIN"/>
    <property type="match status" value="1"/>
</dbReference>
<dbReference type="PANTHER" id="PTHR33317:SF4">
    <property type="entry name" value="POLYNUCLEOTIDYL TRANSFERASE, RIBONUCLEASE H-LIKE SUPERFAMILY PROTEIN"/>
    <property type="match status" value="1"/>
</dbReference>
<dbReference type="Pfam" id="PF03652">
    <property type="entry name" value="RuvX"/>
    <property type="match status" value="1"/>
</dbReference>
<dbReference type="SMART" id="SM00732">
    <property type="entry name" value="YqgFc"/>
    <property type="match status" value="1"/>
</dbReference>
<dbReference type="SUPFAM" id="SSF53098">
    <property type="entry name" value="Ribonuclease H-like"/>
    <property type="match status" value="1"/>
</dbReference>